<sequence>MSVMFDPDTAIYPFPPKPTPLSIDEKAYYREKIKRLLKERNAVMVAHYYTDPEIQQLAEETGGCISDSLEMARFGAKHPASTLLVAGVRFMGETAKILSPEKTILMPTLQAECSLDLGCPVEEFNAFCDAHPDRTVVVYANTSAAVKVRADWVVTSSIAVELIDHLDSLGEKIIWAPDKHLGRYVQKQTGGDILCWQGACIVHDEFKTQALTRLQEEYPDAAILVHPESPQAIVDMADAVGSTSQLIAAAKTLPHQRLIVATDRGIFYKMQQAVPDKELLEAPTAGEGATCRSCAHCPWMAMNGLQAIAEALEQEGSNHEVHVDERLRERALVPLNRMLDFAATLRG</sequence>
<accession>B2TUY1</accession>
<gene>
    <name evidence="1" type="primary">nadA</name>
    <name type="ordered locus">SbBS512_E0671</name>
</gene>
<reference key="1">
    <citation type="submission" date="2008-05" db="EMBL/GenBank/DDBJ databases">
        <title>Complete sequence of Shigella boydii serotype 18 strain BS512.</title>
        <authorList>
            <person name="Rasko D.A."/>
            <person name="Rosovitz M."/>
            <person name="Maurelli A.T."/>
            <person name="Myers G."/>
            <person name="Seshadri R."/>
            <person name="Cer R."/>
            <person name="Jiang L."/>
            <person name="Ravel J."/>
            <person name="Sebastian Y."/>
        </authorList>
    </citation>
    <scope>NUCLEOTIDE SEQUENCE [LARGE SCALE GENOMIC DNA]</scope>
    <source>
        <strain>CDC 3083-94 / BS512</strain>
    </source>
</reference>
<evidence type="ECO:0000255" key="1">
    <source>
        <dbReference type="HAMAP-Rule" id="MF_00567"/>
    </source>
</evidence>
<comment type="function">
    <text evidence="1">Catalyzes the condensation of iminoaspartate with dihydroxyacetone phosphate to form quinolinate.</text>
</comment>
<comment type="catalytic activity">
    <reaction evidence="1">
        <text>iminosuccinate + dihydroxyacetone phosphate = quinolinate + phosphate + 2 H2O + H(+)</text>
        <dbReference type="Rhea" id="RHEA:25888"/>
        <dbReference type="ChEBI" id="CHEBI:15377"/>
        <dbReference type="ChEBI" id="CHEBI:15378"/>
        <dbReference type="ChEBI" id="CHEBI:29959"/>
        <dbReference type="ChEBI" id="CHEBI:43474"/>
        <dbReference type="ChEBI" id="CHEBI:57642"/>
        <dbReference type="ChEBI" id="CHEBI:77875"/>
        <dbReference type="EC" id="2.5.1.72"/>
    </reaction>
    <physiologicalReaction direction="left-to-right" evidence="1">
        <dbReference type="Rhea" id="RHEA:25889"/>
    </physiologicalReaction>
</comment>
<comment type="cofactor">
    <cofactor evidence="1">
        <name>[4Fe-4S] cluster</name>
        <dbReference type="ChEBI" id="CHEBI:49883"/>
    </cofactor>
    <text evidence="1">Binds 1 [4Fe-4S] cluster per subunit.</text>
</comment>
<comment type="pathway">
    <text evidence="1">Cofactor biosynthesis; NAD(+) biosynthesis; quinolinate from iminoaspartate: step 1/1.</text>
</comment>
<comment type="subcellular location">
    <subcellularLocation>
        <location evidence="1">Cytoplasm</location>
    </subcellularLocation>
</comment>
<comment type="similarity">
    <text evidence="1">Belongs to the quinolinate synthase family. Type 1 subfamily.</text>
</comment>
<proteinExistence type="inferred from homology"/>
<name>NADA_SHIB3</name>
<feature type="chain" id="PRO_1000129428" description="Quinolinate synthase">
    <location>
        <begin position="1"/>
        <end position="347"/>
    </location>
</feature>
<feature type="binding site" evidence="1">
    <location>
        <position position="47"/>
    </location>
    <ligand>
        <name>iminosuccinate</name>
        <dbReference type="ChEBI" id="CHEBI:77875"/>
    </ligand>
</feature>
<feature type="binding site" evidence="1">
    <location>
        <position position="68"/>
    </location>
    <ligand>
        <name>iminosuccinate</name>
        <dbReference type="ChEBI" id="CHEBI:77875"/>
    </ligand>
</feature>
<feature type="binding site" evidence="1">
    <location>
        <position position="113"/>
    </location>
    <ligand>
        <name>[4Fe-4S] cluster</name>
        <dbReference type="ChEBI" id="CHEBI:49883"/>
    </ligand>
</feature>
<feature type="binding site" evidence="1">
    <location>
        <begin position="139"/>
        <end position="141"/>
    </location>
    <ligand>
        <name>iminosuccinate</name>
        <dbReference type="ChEBI" id="CHEBI:77875"/>
    </ligand>
</feature>
<feature type="binding site" evidence="1">
    <location>
        <position position="156"/>
    </location>
    <ligand>
        <name>iminosuccinate</name>
        <dbReference type="ChEBI" id="CHEBI:77875"/>
    </ligand>
</feature>
<feature type="binding site" evidence="1">
    <location>
        <position position="200"/>
    </location>
    <ligand>
        <name>[4Fe-4S] cluster</name>
        <dbReference type="ChEBI" id="CHEBI:49883"/>
    </ligand>
</feature>
<feature type="binding site" evidence="1">
    <location>
        <begin position="226"/>
        <end position="228"/>
    </location>
    <ligand>
        <name>iminosuccinate</name>
        <dbReference type="ChEBI" id="CHEBI:77875"/>
    </ligand>
</feature>
<feature type="binding site" evidence="1">
    <location>
        <position position="243"/>
    </location>
    <ligand>
        <name>iminosuccinate</name>
        <dbReference type="ChEBI" id="CHEBI:77875"/>
    </ligand>
</feature>
<feature type="binding site" evidence="1">
    <location>
        <position position="297"/>
    </location>
    <ligand>
        <name>[4Fe-4S] cluster</name>
        <dbReference type="ChEBI" id="CHEBI:49883"/>
    </ligand>
</feature>
<keyword id="KW-0004">4Fe-4S</keyword>
<keyword id="KW-0963">Cytoplasm</keyword>
<keyword id="KW-0408">Iron</keyword>
<keyword id="KW-0411">Iron-sulfur</keyword>
<keyword id="KW-0479">Metal-binding</keyword>
<keyword id="KW-0662">Pyridine nucleotide biosynthesis</keyword>
<keyword id="KW-1185">Reference proteome</keyword>
<keyword id="KW-0808">Transferase</keyword>
<dbReference type="EC" id="2.5.1.72" evidence="1"/>
<dbReference type="EMBL" id="CP001063">
    <property type="protein sequence ID" value="ACD06777.1"/>
    <property type="molecule type" value="Genomic_DNA"/>
</dbReference>
<dbReference type="RefSeq" id="WP_000115303.1">
    <property type="nucleotide sequence ID" value="NC_010658.1"/>
</dbReference>
<dbReference type="SMR" id="B2TUY1"/>
<dbReference type="STRING" id="344609.SbBS512_E0671"/>
<dbReference type="KEGG" id="sbc:SbBS512_E0671"/>
<dbReference type="HOGENOM" id="CLU_047382_1_0_6"/>
<dbReference type="UniPathway" id="UPA00253">
    <property type="reaction ID" value="UER00327"/>
</dbReference>
<dbReference type="Proteomes" id="UP000001030">
    <property type="component" value="Chromosome"/>
</dbReference>
<dbReference type="GO" id="GO:0005829">
    <property type="term" value="C:cytosol"/>
    <property type="evidence" value="ECO:0007669"/>
    <property type="project" value="TreeGrafter"/>
</dbReference>
<dbReference type="GO" id="GO:0051539">
    <property type="term" value="F:4 iron, 4 sulfur cluster binding"/>
    <property type="evidence" value="ECO:0007669"/>
    <property type="project" value="UniProtKB-KW"/>
</dbReference>
<dbReference type="GO" id="GO:0046872">
    <property type="term" value="F:metal ion binding"/>
    <property type="evidence" value="ECO:0007669"/>
    <property type="project" value="UniProtKB-KW"/>
</dbReference>
<dbReference type="GO" id="GO:0008987">
    <property type="term" value="F:quinolinate synthetase A activity"/>
    <property type="evidence" value="ECO:0007669"/>
    <property type="project" value="UniProtKB-UniRule"/>
</dbReference>
<dbReference type="GO" id="GO:0034628">
    <property type="term" value="P:'de novo' NAD biosynthetic process from L-aspartate"/>
    <property type="evidence" value="ECO:0007669"/>
    <property type="project" value="TreeGrafter"/>
</dbReference>
<dbReference type="FunFam" id="3.40.50.10800:FF:000001">
    <property type="entry name" value="Quinolinate synthase A"/>
    <property type="match status" value="1"/>
</dbReference>
<dbReference type="FunFam" id="3.40.50.10800:FF:000003">
    <property type="entry name" value="Quinolinate synthase A"/>
    <property type="match status" value="1"/>
</dbReference>
<dbReference type="Gene3D" id="3.40.50.10800">
    <property type="entry name" value="NadA-like"/>
    <property type="match status" value="3"/>
</dbReference>
<dbReference type="HAMAP" id="MF_00567">
    <property type="entry name" value="NadA_type1"/>
    <property type="match status" value="1"/>
</dbReference>
<dbReference type="InterPro" id="IPR003473">
    <property type="entry name" value="NadA"/>
</dbReference>
<dbReference type="InterPro" id="IPR036094">
    <property type="entry name" value="NadA_sf"/>
</dbReference>
<dbReference type="InterPro" id="IPR023513">
    <property type="entry name" value="Quinolinate_synth_A_type1"/>
</dbReference>
<dbReference type="NCBIfam" id="TIGR00550">
    <property type="entry name" value="nadA"/>
    <property type="match status" value="1"/>
</dbReference>
<dbReference type="NCBIfam" id="NF006877">
    <property type="entry name" value="PRK09375.1-1"/>
    <property type="match status" value="1"/>
</dbReference>
<dbReference type="NCBIfam" id="NF006878">
    <property type="entry name" value="PRK09375.1-2"/>
    <property type="match status" value="1"/>
</dbReference>
<dbReference type="PANTHER" id="PTHR30573:SF0">
    <property type="entry name" value="QUINOLINATE SYNTHASE, CHLOROPLASTIC"/>
    <property type="match status" value="1"/>
</dbReference>
<dbReference type="PANTHER" id="PTHR30573">
    <property type="entry name" value="QUINOLINATE SYNTHETASE A"/>
    <property type="match status" value="1"/>
</dbReference>
<dbReference type="Pfam" id="PF02445">
    <property type="entry name" value="NadA"/>
    <property type="match status" value="1"/>
</dbReference>
<dbReference type="SUPFAM" id="SSF142754">
    <property type="entry name" value="NadA-like"/>
    <property type="match status" value="1"/>
</dbReference>
<organism>
    <name type="scientific">Shigella boydii serotype 18 (strain CDC 3083-94 / BS512)</name>
    <dbReference type="NCBI Taxonomy" id="344609"/>
    <lineage>
        <taxon>Bacteria</taxon>
        <taxon>Pseudomonadati</taxon>
        <taxon>Pseudomonadota</taxon>
        <taxon>Gammaproteobacteria</taxon>
        <taxon>Enterobacterales</taxon>
        <taxon>Enterobacteriaceae</taxon>
        <taxon>Shigella</taxon>
    </lineage>
</organism>
<protein>
    <recommendedName>
        <fullName evidence="1">Quinolinate synthase</fullName>
        <ecNumber evidence="1">2.5.1.72</ecNumber>
    </recommendedName>
</protein>